<evidence type="ECO:0000255" key="1">
    <source>
        <dbReference type="HAMAP-Rule" id="MF_01025"/>
    </source>
</evidence>
<evidence type="ECO:0000305" key="2"/>
<protein>
    <recommendedName>
        <fullName evidence="1">2-isopropylmalate synthase</fullName>
        <ecNumber evidence="1">2.3.3.13</ecNumber>
    </recommendedName>
    <alternativeName>
        <fullName evidence="1">Alpha-IPM synthase</fullName>
    </alternativeName>
    <alternativeName>
        <fullName evidence="1">Alpha-isopropylmalate synthase</fullName>
    </alternativeName>
</protein>
<dbReference type="EC" id="2.3.3.13" evidence="1"/>
<dbReference type="EMBL" id="AE004969">
    <property type="protein sequence ID" value="AAW89553.2"/>
    <property type="molecule type" value="Genomic_DNA"/>
</dbReference>
<dbReference type="RefSeq" id="WP_010358189.1">
    <property type="nucleotide sequence ID" value="NC_002946.2"/>
</dbReference>
<dbReference type="SMR" id="Q5F8D4"/>
<dbReference type="STRING" id="242231.NGO_0848"/>
<dbReference type="KEGG" id="ngo:NGO_0848"/>
<dbReference type="PATRIC" id="fig|242231.10.peg.1002"/>
<dbReference type="HOGENOM" id="CLU_022158_0_1_4"/>
<dbReference type="UniPathway" id="UPA00048">
    <property type="reaction ID" value="UER00070"/>
</dbReference>
<dbReference type="Proteomes" id="UP000000535">
    <property type="component" value="Chromosome"/>
</dbReference>
<dbReference type="GO" id="GO:0005829">
    <property type="term" value="C:cytosol"/>
    <property type="evidence" value="ECO:0007669"/>
    <property type="project" value="TreeGrafter"/>
</dbReference>
<dbReference type="GO" id="GO:0003852">
    <property type="term" value="F:2-isopropylmalate synthase activity"/>
    <property type="evidence" value="ECO:0007669"/>
    <property type="project" value="UniProtKB-UniRule"/>
</dbReference>
<dbReference type="GO" id="GO:0003985">
    <property type="term" value="F:acetyl-CoA C-acetyltransferase activity"/>
    <property type="evidence" value="ECO:0007669"/>
    <property type="project" value="UniProtKB-UniRule"/>
</dbReference>
<dbReference type="GO" id="GO:0030145">
    <property type="term" value="F:manganese ion binding"/>
    <property type="evidence" value="ECO:0007669"/>
    <property type="project" value="UniProtKB-UniRule"/>
</dbReference>
<dbReference type="GO" id="GO:0009098">
    <property type="term" value="P:L-leucine biosynthetic process"/>
    <property type="evidence" value="ECO:0007669"/>
    <property type="project" value="UniProtKB-UniRule"/>
</dbReference>
<dbReference type="CDD" id="cd07940">
    <property type="entry name" value="DRE_TIM_IPMS"/>
    <property type="match status" value="1"/>
</dbReference>
<dbReference type="FunFam" id="1.10.238.260:FF:000001">
    <property type="entry name" value="2-isopropylmalate synthase"/>
    <property type="match status" value="1"/>
</dbReference>
<dbReference type="FunFam" id="3.20.20.70:FF:000010">
    <property type="entry name" value="2-isopropylmalate synthase"/>
    <property type="match status" value="1"/>
</dbReference>
<dbReference type="FunFam" id="3.30.160.270:FF:000003">
    <property type="entry name" value="2-isopropylmalate synthase"/>
    <property type="match status" value="1"/>
</dbReference>
<dbReference type="Gene3D" id="1.10.238.260">
    <property type="match status" value="1"/>
</dbReference>
<dbReference type="Gene3D" id="3.30.160.270">
    <property type="match status" value="1"/>
</dbReference>
<dbReference type="Gene3D" id="3.20.20.70">
    <property type="entry name" value="Aldolase class I"/>
    <property type="match status" value="1"/>
</dbReference>
<dbReference type="HAMAP" id="MF_01025">
    <property type="entry name" value="LeuA_type1"/>
    <property type="match status" value="1"/>
</dbReference>
<dbReference type="InterPro" id="IPR050073">
    <property type="entry name" value="2-IPM_HCS-like"/>
</dbReference>
<dbReference type="InterPro" id="IPR013709">
    <property type="entry name" value="2-isopropylmalate_synth_dimer"/>
</dbReference>
<dbReference type="InterPro" id="IPR002034">
    <property type="entry name" value="AIPM/Hcit_synth_CS"/>
</dbReference>
<dbReference type="InterPro" id="IPR013785">
    <property type="entry name" value="Aldolase_TIM"/>
</dbReference>
<dbReference type="InterPro" id="IPR054691">
    <property type="entry name" value="LeuA/HCS_post-cat"/>
</dbReference>
<dbReference type="InterPro" id="IPR036230">
    <property type="entry name" value="LeuA_allosteric_dom_sf"/>
</dbReference>
<dbReference type="InterPro" id="IPR005671">
    <property type="entry name" value="LeuA_bact_synth"/>
</dbReference>
<dbReference type="InterPro" id="IPR000891">
    <property type="entry name" value="PYR_CT"/>
</dbReference>
<dbReference type="NCBIfam" id="NF046037">
    <property type="entry name" value="carphisopro"/>
    <property type="match status" value="1"/>
</dbReference>
<dbReference type="NCBIfam" id="TIGR00973">
    <property type="entry name" value="leuA_bact"/>
    <property type="match status" value="1"/>
</dbReference>
<dbReference type="NCBIfam" id="NF002086">
    <property type="entry name" value="PRK00915.1-3"/>
    <property type="match status" value="1"/>
</dbReference>
<dbReference type="NCBIfam" id="NF002087">
    <property type="entry name" value="PRK00915.1-4"/>
    <property type="match status" value="1"/>
</dbReference>
<dbReference type="PANTHER" id="PTHR10277:SF9">
    <property type="entry name" value="2-ISOPROPYLMALATE SYNTHASE 1, CHLOROPLASTIC-RELATED"/>
    <property type="match status" value="1"/>
</dbReference>
<dbReference type="PANTHER" id="PTHR10277">
    <property type="entry name" value="HOMOCITRATE SYNTHASE-RELATED"/>
    <property type="match status" value="1"/>
</dbReference>
<dbReference type="Pfam" id="PF22617">
    <property type="entry name" value="HCS_D2"/>
    <property type="match status" value="1"/>
</dbReference>
<dbReference type="Pfam" id="PF00682">
    <property type="entry name" value="HMGL-like"/>
    <property type="match status" value="1"/>
</dbReference>
<dbReference type="Pfam" id="PF08502">
    <property type="entry name" value="LeuA_dimer"/>
    <property type="match status" value="1"/>
</dbReference>
<dbReference type="SMART" id="SM00917">
    <property type="entry name" value="LeuA_dimer"/>
    <property type="match status" value="1"/>
</dbReference>
<dbReference type="SUPFAM" id="SSF110921">
    <property type="entry name" value="2-isopropylmalate synthase LeuA, allosteric (dimerisation) domain"/>
    <property type="match status" value="1"/>
</dbReference>
<dbReference type="SUPFAM" id="SSF51569">
    <property type="entry name" value="Aldolase"/>
    <property type="match status" value="1"/>
</dbReference>
<dbReference type="PROSITE" id="PS00815">
    <property type="entry name" value="AIPM_HOMOCIT_SYNTH_1"/>
    <property type="match status" value="1"/>
</dbReference>
<dbReference type="PROSITE" id="PS00816">
    <property type="entry name" value="AIPM_HOMOCIT_SYNTH_2"/>
    <property type="match status" value="1"/>
</dbReference>
<dbReference type="PROSITE" id="PS50991">
    <property type="entry name" value="PYR_CT"/>
    <property type="match status" value="1"/>
</dbReference>
<organism>
    <name type="scientific">Neisseria gonorrhoeae (strain ATCC 700825 / FA 1090)</name>
    <dbReference type="NCBI Taxonomy" id="242231"/>
    <lineage>
        <taxon>Bacteria</taxon>
        <taxon>Pseudomonadati</taxon>
        <taxon>Pseudomonadota</taxon>
        <taxon>Betaproteobacteria</taxon>
        <taxon>Neisseriales</taxon>
        <taxon>Neisseriaceae</taxon>
        <taxon>Neisseria</taxon>
    </lineage>
</organism>
<reference key="1">
    <citation type="submission" date="2003-03" db="EMBL/GenBank/DDBJ databases">
        <title>The complete genome sequence of Neisseria gonorrhoeae.</title>
        <authorList>
            <person name="Lewis L.A."/>
            <person name="Gillaspy A.F."/>
            <person name="McLaughlin R.E."/>
            <person name="Gipson M."/>
            <person name="Ducey T.F."/>
            <person name="Ownbey T."/>
            <person name="Hartman K."/>
            <person name="Nydick C."/>
            <person name="Carson M.B."/>
            <person name="Vaughn J."/>
            <person name="Thomson C."/>
            <person name="Song L."/>
            <person name="Lin S."/>
            <person name="Yuan X."/>
            <person name="Najar F."/>
            <person name="Zhan M."/>
            <person name="Ren Q."/>
            <person name="Zhu H."/>
            <person name="Qi S."/>
            <person name="Kenton S.M."/>
            <person name="Lai H."/>
            <person name="White J.D."/>
            <person name="Clifton S."/>
            <person name="Roe B.A."/>
            <person name="Dyer D.W."/>
        </authorList>
    </citation>
    <scope>NUCLEOTIDE SEQUENCE [LARGE SCALE GENOMIC DNA]</scope>
    <source>
        <strain>ATCC 700825 / FA 1090</strain>
    </source>
</reference>
<comment type="function">
    <text evidence="1">Catalyzes the condensation of the acetyl group of acetyl-CoA with 3-methyl-2-oxobutanoate (2-ketoisovalerate) to form 3-carboxy-3-hydroxy-4-methylpentanoate (2-isopropylmalate).</text>
</comment>
<comment type="catalytic activity">
    <reaction evidence="1">
        <text>3-methyl-2-oxobutanoate + acetyl-CoA + H2O = (2S)-2-isopropylmalate + CoA + H(+)</text>
        <dbReference type="Rhea" id="RHEA:21524"/>
        <dbReference type="ChEBI" id="CHEBI:1178"/>
        <dbReference type="ChEBI" id="CHEBI:11851"/>
        <dbReference type="ChEBI" id="CHEBI:15377"/>
        <dbReference type="ChEBI" id="CHEBI:15378"/>
        <dbReference type="ChEBI" id="CHEBI:57287"/>
        <dbReference type="ChEBI" id="CHEBI:57288"/>
        <dbReference type="EC" id="2.3.3.13"/>
    </reaction>
</comment>
<comment type="cofactor">
    <cofactor evidence="1">
        <name>Mn(2+)</name>
        <dbReference type="ChEBI" id="CHEBI:29035"/>
    </cofactor>
</comment>
<comment type="pathway">
    <text evidence="1">Amino-acid biosynthesis; L-leucine biosynthesis; L-leucine from 3-methyl-2-oxobutanoate: step 1/4.</text>
</comment>
<comment type="subunit">
    <text evidence="1">Homodimer.</text>
</comment>
<comment type="subcellular location">
    <subcellularLocation>
        <location evidence="1">Cytoplasm</location>
    </subcellularLocation>
</comment>
<comment type="similarity">
    <text evidence="1">Belongs to the alpha-IPM synthase/homocitrate synthase family. LeuA type 1 subfamily.</text>
</comment>
<comment type="caution">
    <text evidence="2">It is uncertain whether Met-1 or Met-81 is the initiator. Has been predicted to be much longer than most orthologs, this longer version can be predicted for many Neisseria species.</text>
</comment>
<sequence>MQLDIDRLVAYFGGVNALAEALKRHDPENAATTAAIYKWRTRGSLPLAQLQKLTALAESQGRPLDLNAFLQKNESLERTEMTQANRVIIFDTTLRDGEQSPGAAMTKEEKIRVARQLEKLGADIIEAGFAAASPGDFEAVNAIAKTITKSTVCSLSRAIERDIRQAGKAVAPAPKKRIHTFIATSPIHMEYKLKMKPKQVIEAAVKAVKIAREYTDDVEFSCEDALRSQIDFLAEICGAVIEAGATTINIPDTVGYSIPYKTEEFFRELIAKTPNGGKVVWSAHCHNDLGLAVANSLAALKGGARQVECTVNGLGERAGNASVEEIVMALKVRHDLFGLETGIDTTQIVPSSKLVSTITGYPVQPNKAIVGANAFSHESGIHQDGVLKHRETYEIMSAESVGWSANRLSLGKLSGRNAFKTKLADLGIELESEEALNAAFARFKELADKKREIFDEDLHALVSDEMGNMNAESYKFISQKISTETGEEPRADIVFGIKGEEKRASATGSGPVDAIFKAIESVAQSGATLQIYSVNAVTQGTESQGETSVRLARGNRVVNGQGADTDILAATAKAYLSALSKLEFSAAKPKAQGSGTI</sequence>
<gene>
    <name evidence="1" type="primary">leuA</name>
    <name type="ordered locus">NGO_0848</name>
</gene>
<keyword id="KW-0028">Amino-acid biosynthesis</keyword>
<keyword id="KW-0100">Branched-chain amino acid biosynthesis</keyword>
<keyword id="KW-0963">Cytoplasm</keyword>
<keyword id="KW-0432">Leucine biosynthesis</keyword>
<keyword id="KW-0464">Manganese</keyword>
<keyword id="KW-0479">Metal-binding</keyword>
<keyword id="KW-1185">Reference proteome</keyword>
<keyword id="KW-0808">Transferase</keyword>
<feature type="chain" id="PRO_1000149225" description="2-isopropylmalate synthase">
    <location>
        <begin position="1"/>
        <end position="597"/>
    </location>
</feature>
<feature type="domain" description="Pyruvate carboxyltransferase" evidence="1">
    <location>
        <begin position="87"/>
        <end position="349"/>
    </location>
</feature>
<feature type="region of interest" description="Unknown" evidence="2">
    <location>
        <begin position="1"/>
        <end position="80"/>
    </location>
</feature>
<feature type="region of interest" description="2-isopropylmalate synthase" evidence="2">
    <location>
        <begin position="87"/>
        <end position="349"/>
    </location>
</feature>
<feature type="region of interest" description="Regulatory domain" evidence="1">
    <location>
        <begin position="475"/>
        <end position="597"/>
    </location>
</feature>
<feature type="binding site" evidence="1">
    <location>
        <position position="96"/>
    </location>
    <ligand>
        <name>Mn(2+)</name>
        <dbReference type="ChEBI" id="CHEBI:29035"/>
    </ligand>
</feature>
<feature type="binding site" evidence="1">
    <location>
        <position position="284"/>
    </location>
    <ligand>
        <name>Mn(2+)</name>
        <dbReference type="ChEBI" id="CHEBI:29035"/>
    </ligand>
</feature>
<feature type="binding site" evidence="1">
    <location>
        <position position="286"/>
    </location>
    <ligand>
        <name>Mn(2+)</name>
        <dbReference type="ChEBI" id="CHEBI:29035"/>
    </ligand>
</feature>
<feature type="binding site" evidence="1">
    <location>
        <position position="320"/>
    </location>
    <ligand>
        <name>Mn(2+)</name>
        <dbReference type="ChEBI" id="CHEBI:29035"/>
    </ligand>
</feature>
<name>LEU1_NEIG1</name>
<proteinExistence type="inferred from homology"/>
<accession>Q5F8D4</accession>